<feature type="chain" id="PRO_1000045305" description="Probable transcriptional regulatory protein DNO_1179">
    <location>
        <begin position="1"/>
        <end position="244"/>
    </location>
</feature>
<dbReference type="EMBL" id="CP000513">
    <property type="protein sequence ID" value="ABQ13765.1"/>
    <property type="molecule type" value="Genomic_DNA"/>
</dbReference>
<dbReference type="RefSeq" id="WP_012031483.1">
    <property type="nucleotide sequence ID" value="NC_009446.1"/>
</dbReference>
<dbReference type="SMR" id="A5EXG2"/>
<dbReference type="STRING" id="246195.DNO_1179"/>
<dbReference type="KEGG" id="dno:DNO_1179"/>
<dbReference type="eggNOG" id="COG0217">
    <property type="taxonomic scope" value="Bacteria"/>
</dbReference>
<dbReference type="HOGENOM" id="CLU_062974_2_2_6"/>
<dbReference type="OrthoDB" id="9781053at2"/>
<dbReference type="Proteomes" id="UP000000248">
    <property type="component" value="Chromosome"/>
</dbReference>
<dbReference type="GO" id="GO:0005829">
    <property type="term" value="C:cytosol"/>
    <property type="evidence" value="ECO:0007669"/>
    <property type="project" value="TreeGrafter"/>
</dbReference>
<dbReference type="GO" id="GO:0003677">
    <property type="term" value="F:DNA binding"/>
    <property type="evidence" value="ECO:0007669"/>
    <property type="project" value="UniProtKB-UniRule"/>
</dbReference>
<dbReference type="GO" id="GO:0006355">
    <property type="term" value="P:regulation of DNA-templated transcription"/>
    <property type="evidence" value="ECO:0007669"/>
    <property type="project" value="UniProtKB-UniRule"/>
</dbReference>
<dbReference type="FunFam" id="1.10.10.200:FF:000001">
    <property type="entry name" value="Probable transcriptional regulatory protein YebC"/>
    <property type="match status" value="1"/>
</dbReference>
<dbReference type="FunFam" id="3.30.70.980:FF:000002">
    <property type="entry name" value="Probable transcriptional regulatory protein YebC"/>
    <property type="match status" value="1"/>
</dbReference>
<dbReference type="Gene3D" id="1.10.10.200">
    <property type="match status" value="1"/>
</dbReference>
<dbReference type="Gene3D" id="3.30.70.980">
    <property type="match status" value="2"/>
</dbReference>
<dbReference type="HAMAP" id="MF_00693">
    <property type="entry name" value="Transcrip_reg_TACO1"/>
    <property type="match status" value="1"/>
</dbReference>
<dbReference type="InterPro" id="IPR017856">
    <property type="entry name" value="Integrase-like_N"/>
</dbReference>
<dbReference type="InterPro" id="IPR048300">
    <property type="entry name" value="TACO1_YebC-like_2nd/3rd_dom"/>
</dbReference>
<dbReference type="InterPro" id="IPR049083">
    <property type="entry name" value="TACO1_YebC_N"/>
</dbReference>
<dbReference type="InterPro" id="IPR002876">
    <property type="entry name" value="Transcrip_reg_TACO1-like"/>
</dbReference>
<dbReference type="InterPro" id="IPR026564">
    <property type="entry name" value="Transcrip_reg_TACO1-like_dom3"/>
</dbReference>
<dbReference type="InterPro" id="IPR029072">
    <property type="entry name" value="YebC-like"/>
</dbReference>
<dbReference type="NCBIfam" id="NF001030">
    <property type="entry name" value="PRK00110.1"/>
    <property type="match status" value="1"/>
</dbReference>
<dbReference type="NCBIfam" id="NF009044">
    <property type="entry name" value="PRK12378.1"/>
    <property type="match status" value="1"/>
</dbReference>
<dbReference type="NCBIfam" id="TIGR01033">
    <property type="entry name" value="YebC/PmpR family DNA-binding transcriptional regulator"/>
    <property type="match status" value="1"/>
</dbReference>
<dbReference type="PANTHER" id="PTHR12532:SF6">
    <property type="entry name" value="TRANSCRIPTIONAL REGULATORY PROTEIN YEBC-RELATED"/>
    <property type="match status" value="1"/>
</dbReference>
<dbReference type="PANTHER" id="PTHR12532">
    <property type="entry name" value="TRANSLATIONAL ACTIVATOR OF CYTOCHROME C OXIDASE 1"/>
    <property type="match status" value="1"/>
</dbReference>
<dbReference type="Pfam" id="PF20772">
    <property type="entry name" value="TACO1_YebC_N"/>
    <property type="match status" value="1"/>
</dbReference>
<dbReference type="Pfam" id="PF01709">
    <property type="entry name" value="Transcrip_reg"/>
    <property type="match status" value="1"/>
</dbReference>
<dbReference type="SUPFAM" id="SSF75625">
    <property type="entry name" value="YebC-like"/>
    <property type="match status" value="1"/>
</dbReference>
<protein>
    <recommendedName>
        <fullName evidence="1">Probable transcriptional regulatory protein DNO_1179</fullName>
    </recommendedName>
</protein>
<reference key="1">
    <citation type="journal article" date="2007" name="Nat. Biotechnol.">
        <title>Genome sequence and identification of candidate vaccine antigens from the animal pathogen Dichelobacter nodosus.</title>
        <authorList>
            <person name="Myers G.S.A."/>
            <person name="Parker D."/>
            <person name="Al-Hasani K."/>
            <person name="Kennan R.M."/>
            <person name="Seemann T."/>
            <person name="Ren Q."/>
            <person name="Badger J.H."/>
            <person name="Selengut J.D."/>
            <person name="Deboy R.T."/>
            <person name="Tettelin H."/>
            <person name="Boyce J.D."/>
            <person name="McCarl V.P."/>
            <person name="Han X."/>
            <person name="Nelson W.C."/>
            <person name="Madupu R."/>
            <person name="Mohamoud Y."/>
            <person name="Holley T."/>
            <person name="Fedorova N."/>
            <person name="Khouri H."/>
            <person name="Bottomley S.P."/>
            <person name="Whittington R.J."/>
            <person name="Adler B."/>
            <person name="Songer J.G."/>
            <person name="Rood J.I."/>
            <person name="Paulsen I.T."/>
        </authorList>
    </citation>
    <scope>NUCLEOTIDE SEQUENCE [LARGE SCALE GENOMIC DNA]</scope>
    <source>
        <strain>VCS1703A</strain>
    </source>
</reference>
<organism>
    <name type="scientific">Dichelobacter nodosus (strain VCS1703A)</name>
    <dbReference type="NCBI Taxonomy" id="246195"/>
    <lineage>
        <taxon>Bacteria</taxon>
        <taxon>Pseudomonadati</taxon>
        <taxon>Pseudomonadota</taxon>
        <taxon>Gammaproteobacteria</taxon>
        <taxon>Cardiobacteriales</taxon>
        <taxon>Cardiobacteriaceae</taxon>
        <taxon>Dichelobacter</taxon>
    </lineage>
</organism>
<gene>
    <name type="ordered locus">DNO_1179</name>
</gene>
<sequence>MAGHSKWANIKHKKAKEDAKRGKIFTRLIRELTVAARHGGSDINANPRLRLAVSKAQAENMTKETMERAIKRGAGELDGVQMEEVRFEGYGPSGVAIIVDCLTDNNNRTVGEVRHAFSKCGGNLGTSGSVAFQFKEQGVLFFENVDDEDALMEAALNAGAEDIEFDDKSAEILTAPEEYANVYEALVQAGFTADESEVTLRAENLSAVSLEDAEQVARLLEMLEELDDVQSVVSNADFPEEFEG</sequence>
<name>Y1179_DICNV</name>
<proteinExistence type="inferred from homology"/>
<keyword id="KW-0963">Cytoplasm</keyword>
<keyword id="KW-0238">DNA-binding</keyword>
<keyword id="KW-1185">Reference proteome</keyword>
<keyword id="KW-0804">Transcription</keyword>
<keyword id="KW-0805">Transcription regulation</keyword>
<accession>A5EXG2</accession>
<comment type="subcellular location">
    <subcellularLocation>
        <location evidence="1">Cytoplasm</location>
    </subcellularLocation>
</comment>
<comment type="similarity">
    <text evidence="1">Belongs to the TACO1 family.</text>
</comment>
<evidence type="ECO:0000255" key="1">
    <source>
        <dbReference type="HAMAP-Rule" id="MF_00693"/>
    </source>
</evidence>